<feature type="chain" id="PRO_0000074017" description="DNA-directed RNA polymerase subunit Rpo1C">
    <location>
        <begin position="1"/>
        <end position="451"/>
    </location>
</feature>
<feature type="region of interest" description="Unknown">
    <location>
        <begin position="1"/>
        <end position="68"/>
    </location>
</feature>
<feature type="region of interest" description="DNA-directed RNA polymerase subunit Rpo1C">
    <location>
        <begin position="69"/>
        <end position="451"/>
    </location>
</feature>
<reference key="1">
    <citation type="journal article" date="1997" name="J. Bacteriol.">
        <title>Complete genome sequence of Methanobacterium thermoautotrophicum deltaH: functional analysis and comparative genomics.</title>
        <authorList>
            <person name="Smith D.R."/>
            <person name="Doucette-Stamm L.A."/>
            <person name="Deloughery C."/>
            <person name="Lee H.-M."/>
            <person name="Dubois J."/>
            <person name="Aldredge T."/>
            <person name="Bashirzadeh R."/>
            <person name="Blakely D."/>
            <person name="Cook R."/>
            <person name="Gilbert K."/>
            <person name="Harrison D."/>
            <person name="Hoang L."/>
            <person name="Keagle P."/>
            <person name="Lumm W."/>
            <person name="Pothier B."/>
            <person name="Qiu D."/>
            <person name="Spadafora R."/>
            <person name="Vicare R."/>
            <person name="Wang Y."/>
            <person name="Wierzbowski J."/>
            <person name="Gibson R."/>
            <person name="Jiwani N."/>
            <person name="Caruso A."/>
            <person name="Bush D."/>
            <person name="Safer H."/>
            <person name="Patwell D."/>
            <person name="Prabhakar S."/>
            <person name="McDougall S."/>
            <person name="Shimer G."/>
            <person name="Goyal A."/>
            <person name="Pietrovski S."/>
            <person name="Church G.M."/>
            <person name="Daniels C.J."/>
            <person name="Mao J.-I."/>
            <person name="Rice P."/>
            <person name="Noelling J."/>
            <person name="Reeve J.N."/>
        </authorList>
    </citation>
    <scope>NUCLEOTIDE SEQUENCE [LARGE SCALE GENOMIC DNA]</scope>
    <source>
        <strain>ATCC 29096 / DSM 1053 / JCM 10044 / NBRC 100330 / Delta H</strain>
    </source>
</reference>
<dbReference type="EC" id="2.7.7.6" evidence="1"/>
<dbReference type="EMBL" id="AE000666">
    <property type="protein sequence ID" value="AAB85543.1"/>
    <property type="molecule type" value="Genomic_DNA"/>
</dbReference>
<dbReference type="PIR" id="H69006">
    <property type="entry name" value="H69006"/>
</dbReference>
<dbReference type="SMR" id="O27126"/>
<dbReference type="STRING" id="187420.MTH_1052"/>
<dbReference type="PaxDb" id="187420-MTH_1052"/>
<dbReference type="EnsemblBacteria" id="AAB85543">
    <property type="protein sequence ID" value="AAB85543"/>
    <property type="gene ID" value="MTH_1052"/>
</dbReference>
<dbReference type="KEGG" id="mth:MTH_1052"/>
<dbReference type="PATRIC" id="fig|187420.15.peg.1031"/>
<dbReference type="HOGENOM" id="CLU_037097_1_0_2"/>
<dbReference type="InParanoid" id="O27126"/>
<dbReference type="Proteomes" id="UP000005223">
    <property type="component" value="Chromosome"/>
</dbReference>
<dbReference type="GO" id="GO:0005737">
    <property type="term" value="C:cytoplasm"/>
    <property type="evidence" value="ECO:0007669"/>
    <property type="project" value="UniProtKB-SubCell"/>
</dbReference>
<dbReference type="GO" id="GO:0000428">
    <property type="term" value="C:DNA-directed RNA polymerase complex"/>
    <property type="evidence" value="ECO:0007669"/>
    <property type="project" value="UniProtKB-KW"/>
</dbReference>
<dbReference type="GO" id="GO:0003677">
    <property type="term" value="F:DNA binding"/>
    <property type="evidence" value="ECO:0007669"/>
    <property type="project" value="UniProtKB-UniRule"/>
</dbReference>
<dbReference type="GO" id="GO:0003899">
    <property type="term" value="F:DNA-directed RNA polymerase activity"/>
    <property type="evidence" value="ECO:0007669"/>
    <property type="project" value="UniProtKB-UniRule"/>
</dbReference>
<dbReference type="GO" id="GO:0006351">
    <property type="term" value="P:DNA-templated transcription"/>
    <property type="evidence" value="ECO:0007669"/>
    <property type="project" value="UniProtKB-UniRule"/>
</dbReference>
<dbReference type="CDD" id="cd06528">
    <property type="entry name" value="RNAP_A"/>
    <property type="match status" value="1"/>
</dbReference>
<dbReference type="Gene3D" id="1.10.150.390">
    <property type="match status" value="1"/>
</dbReference>
<dbReference type="HAMAP" id="MF_00411">
    <property type="entry name" value="RNApol_arch_Rpo1C"/>
    <property type="match status" value="1"/>
</dbReference>
<dbReference type="InterPro" id="IPR045867">
    <property type="entry name" value="DNA-dir_RpoC_beta_prime"/>
</dbReference>
<dbReference type="InterPro" id="IPR007081">
    <property type="entry name" value="RNA_pol_Rpb1_5"/>
</dbReference>
<dbReference type="InterPro" id="IPR012757">
    <property type="entry name" value="RPO1C"/>
</dbReference>
<dbReference type="NCBIfam" id="TIGR02389">
    <property type="entry name" value="RNA_pol_rpoA2"/>
    <property type="match status" value="1"/>
</dbReference>
<dbReference type="PANTHER" id="PTHR19376">
    <property type="entry name" value="DNA-DIRECTED RNA POLYMERASE"/>
    <property type="match status" value="1"/>
</dbReference>
<dbReference type="PANTHER" id="PTHR19376:SF32">
    <property type="entry name" value="DNA-DIRECTED RNA POLYMERASE III SUBUNIT RPC1"/>
    <property type="match status" value="1"/>
</dbReference>
<dbReference type="Pfam" id="PF04998">
    <property type="entry name" value="RNA_pol_Rpb1_5"/>
    <property type="match status" value="1"/>
</dbReference>
<dbReference type="SUPFAM" id="SSF64484">
    <property type="entry name" value="beta and beta-prime subunits of DNA dependent RNA-polymerase"/>
    <property type="match status" value="1"/>
</dbReference>
<sequence length="451" mass="51004">MQDIIGKIEDYSSKNGILLPDPVVEYVARIADEEKLKEPELQEMVRLFSRIAERNQGLDDDELLDAVEDDYQRILKVQELVKRKRARFPPKLIEDIAEVMKKHELSDDELDELIRRVRRAYDRARVEAGEAVGTVAAQSVGEPGTQMTMRTFHYAGVAELNVTLGLPRLIEIVDARKKISTPTMSIYFEGDLRYDEEFVRRKANKIGKSTLNDVLKNFSIQYADMSVVAELDEEKIQEKHLEYDEILAKVEKTFKKVEIDNNILRFEPPKPTIRELRLLADKVRKLQISGVKNIGKVVIRKEDDEWVIHTEGSNLGAVLKEEGVDKVRTTTNDIHEIETVLGIEAARNAIIHEAKRTMEEQGLTVDIRHIMLVADMMTADGSVKSIGRHGISGEKASVLARASFEETGKHLLRASIRGEVDHLTGIIENIIIGQPIPLGTGSVSVVMKERK</sequence>
<protein>
    <recommendedName>
        <fullName evidence="1">DNA-directed RNA polymerase subunit Rpo1C</fullName>
        <ecNumber evidence="1">2.7.7.6</ecNumber>
    </recommendedName>
    <alternativeName>
        <fullName evidence="1">DNA-directed RNA polymerase subunit A''</fullName>
    </alternativeName>
</protein>
<gene>
    <name evidence="1" type="primary">rpo1C</name>
    <name evidence="1" type="synonym">rpoA2</name>
    <name type="ordered locus">MTH_1052</name>
</gene>
<comment type="function">
    <text evidence="1">DNA-dependent RNA polymerase (RNAP) catalyzes the transcription of DNA into RNA using the four ribonucleoside triphosphates as substrates. Forms part of the jaw domain.</text>
</comment>
<comment type="catalytic activity">
    <reaction evidence="1">
        <text>RNA(n) + a ribonucleoside 5'-triphosphate = RNA(n+1) + diphosphate</text>
        <dbReference type="Rhea" id="RHEA:21248"/>
        <dbReference type="Rhea" id="RHEA-COMP:14527"/>
        <dbReference type="Rhea" id="RHEA-COMP:17342"/>
        <dbReference type="ChEBI" id="CHEBI:33019"/>
        <dbReference type="ChEBI" id="CHEBI:61557"/>
        <dbReference type="ChEBI" id="CHEBI:140395"/>
        <dbReference type="EC" id="2.7.7.6"/>
    </reaction>
</comment>
<comment type="subunit">
    <text evidence="1">Part of the RNA polymerase complex.</text>
</comment>
<comment type="subcellular location">
    <subcellularLocation>
        <location evidence="1">Cytoplasm</location>
    </subcellularLocation>
</comment>
<comment type="similarity">
    <text evidence="1">Belongs to the RNA polymerase beta' chain family.</text>
</comment>
<organism>
    <name type="scientific">Methanothermobacter thermautotrophicus (strain ATCC 29096 / DSM 1053 / JCM 10044 / NBRC 100330 / Delta H)</name>
    <name type="common">Methanobacterium thermoautotrophicum</name>
    <dbReference type="NCBI Taxonomy" id="187420"/>
    <lineage>
        <taxon>Archaea</taxon>
        <taxon>Methanobacteriati</taxon>
        <taxon>Methanobacteriota</taxon>
        <taxon>Methanomada group</taxon>
        <taxon>Methanobacteria</taxon>
        <taxon>Methanobacteriales</taxon>
        <taxon>Methanobacteriaceae</taxon>
        <taxon>Methanothermobacter</taxon>
    </lineage>
</organism>
<proteinExistence type="inferred from homology"/>
<name>RPO1C_METTH</name>
<accession>O27126</accession>
<evidence type="ECO:0000255" key="1">
    <source>
        <dbReference type="HAMAP-Rule" id="MF_00411"/>
    </source>
</evidence>
<keyword id="KW-0963">Cytoplasm</keyword>
<keyword id="KW-0238">DNA-binding</keyword>
<keyword id="KW-0240">DNA-directed RNA polymerase</keyword>
<keyword id="KW-0548">Nucleotidyltransferase</keyword>
<keyword id="KW-1185">Reference proteome</keyword>
<keyword id="KW-0804">Transcription</keyword>
<keyword id="KW-0808">Transferase</keyword>